<sequence>MAAMTVQLDIVSAESSIFSGLVAHLQVTGSEGDLGVMPGHAPLLTHIKPGMARIVKQDGKEEVFYLSGGILEVQPSSVSVLADVVMRADDIDEQAAAEAKRRAETAMADAGADFNYAAAAVELAQAVAQLRVVETIKKNIAR</sequence>
<feature type="chain" id="PRO_1000127890" description="ATP synthase epsilon chain">
    <location>
        <begin position="1"/>
        <end position="142"/>
    </location>
</feature>
<dbReference type="EMBL" id="CP000472">
    <property type="protein sequence ID" value="ACJ31770.1"/>
    <property type="molecule type" value="Genomic_DNA"/>
</dbReference>
<dbReference type="RefSeq" id="WP_020915094.1">
    <property type="nucleotide sequence ID" value="NC_011566.1"/>
</dbReference>
<dbReference type="SMR" id="B8CVU4"/>
<dbReference type="STRING" id="225849.swp_5155"/>
<dbReference type="KEGG" id="swp:swp_5155"/>
<dbReference type="eggNOG" id="COG0355">
    <property type="taxonomic scope" value="Bacteria"/>
</dbReference>
<dbReference type="HOGENOM" id="CLU_084338_2_0_6"/>
<dbReference type="OrthoDB" id="9791445at2"/>
<dbReference type="Proteomes" id="UP000000753">
    <property type="component" value="Chromosome"/>
</dbReference>
<dbReference type="GO" id="GO:0005886">
    <property type="term" value="C:plasma membrane"/>
    <property type="evidence" value="ECO:0007669"/>
    <property type="project" value="UniProtKB-SubCell"/>
</dbReference>
<dbReference type="GO" id="GO:0045259">
    <property type="term" value="C:proton-transporting ATP synthase complex"/>
    <property type="evidence" value="ECO:0007669"/>
    <property type="project" value="UniProtKB-KW"/>
</dbReference>
<dbReference type="GO" id="GO:0005524">
    <property type="term" value="F:ATP binding"/>
    <property type="evidence" value="ECO:0007669"/>
    <property type="project" value="UniProtKB-UniRule"/>
</dbReference>
<dbReference type="GO" id="GO:0046933">
    <property type="term" value="F:proton-transporting ATP synthase activity, rotational mechanism"/>
    <property type="evidence" value="ECO:0007669"/>
    <property type="project" value="UniProtKB-UniRule"/>
</dbReference>
<dbReference type="CDD" id="cd12152">
    <property type="entry name" value="F1-ATPase_delta"/>
    <property type="match status" value="1"/>
</dbReference>
<dbReference type="FunFam" id="1.20.5.440:FF:000001">
    <property type="entry name" value="ATP synthase epsilon chain"/>
    <property type="match status" value="1"/>
</dbReference>
<dbReference type="FunFam" id="2.60.15.10:FF:000001">
    <property type="entry name" value="ATP synthase epsilon chain"/>
    <property type="match status" value="1"/>
</dbReference>
<dbReference type="Gene3D" id="1.20.5.440">
    <property type="entry name" value="ATP synthase delta/epsilon subunit, C-terminal domain"/>
    <property type="match status" value="1"/>
</dbReference>
<dbReference type="Gene3D" id="2.60.15.10">
    <property type="entry name" value="F0F1 ATP synthase delta/epsilon subunit, N-terminal"/>
    <property type="match status" value="1"/>
</dbReference>
<dbReference type="HAMAP" id="MF_00530">
    <property type="entry name" value="ATP_synth_epsil_bac"/>
    <property type="match status" value="1"/>
</dbReference>
<dbReference type="InterPro" id="IPR036794">
    <property type="entry name" value="ATP_F1_dsu/esu_C_sf"/>
</dbReference>
<dbReference type="InterPro" id="IPR001469">
    <property type="entry name" value="ATP_synth_F1_dsu/esu"/>
</dbReference>
<dbReference type="InterPro" id="IPR020546">
    <property type="entry name" value="ATP_synth_F1_dsu/esu_N"/>
</dbReference>
<dbReference type="InterPro" id="IPR020547">
    <property type="entry name" value="ATP_synth_F1_esu_C"/>
</dbReference>
<dbReference type="InterPro" id="IPR036771">
    <property type="entry name" value="ATPsynth_dsu/esu_N"/>
</dbReference>
<dbReference type="NCBIfam" id="TIGR01216">
    <property type="entry name" value="ATP_synt_epsi"/>
    <property type="match status" value="1"/>
</dbReference>
<dbReference type="NCBIfam" id="NF001847">
    <property type="entry name" value="PRK00571.1-4"/>
    <property type="match status" value="1"/>
</dbReference>
<dbReference type="PANTHER" id="PTHR13822">
    <property type="entry name" value="ATP SYNTHASE DELTA/EPSILON CHAIN"/>
    <property type="match status" value="1"/>
</dbReference>
<dbReference type="PANTHER" id="PTHR13822:SF10">
    <property type="entry name" value="ATP SYNTHASE EPSILON CHAIN, CHLOROPLASTIC"/>
    <property type="match status" value="1"/>
</dbReference>
<dbReference type="Pfam" id="PF00401">
    <property type="entry name" value="ATP-synt_DE"/>
    <property type="match status" value="1"/>
</dbReference>
<dbReference type="Pfam" id="PF02823">
    <property type="entry name" value="ATP-synt_DE_N"/>
    <property type="match status" value="1"/>
</dbReference>
<dbReference type="SUPFAM" id="SSF46604">
    <property type="entry name" value="Epsilon subunit of F1F0-ATP synthase C-terminal domain"/>
    <property type="match status" value="1"/>
</dbReference>
<dbReference type="SUPFAM" id="SSF51344">
    <property type="entry name" value="Epsilon subunit of F1F0-ATP synthase N-terminal domain"/>
    <property type="match status" value="1"/>
</dbReference>
<evidence type="ECO:0000255" key="1">
    <source>
        <dbReference type="HAMAP-Rule" id="MF_00530"/>
    </source>
</evidence>
<protein>
    <recommendedName>
        <fullName evidence="1">ATP synthase epsilon chain</fullName>
    </recommendedName>
    <alternativeName>
        <fullName evidence="1">ATP synthase F1 sector epsilon subunit</fullName>
    </alternativeName>
    <alternativeName>
        <fullName evidence="1">F-ATPase epsilon subunit</fullName>
    </alternativeName>
</protein>
<accession>B8CVU4</accession>
<reference key="1">
    <citation type="journal article" date="2008" name="PLoS ONE">
        <title>Environmental adaptation: genomic analysis of the piezotolerant and psychrotolerant deep-sea iron reducing bacterium Shewanella piezotolerans WP3.</title>
        <authorList>
            <person name="Wang F."/>
            <person name="Wang J."/>
            <person name="Jian H."/>
            <person name="Zhang B."/>
            <person name="Li S."/>
            <person name="Wang F."/>
            <person name="Zeng X."/>
            <person name="Gao L."/>
            <person name="Bartlett D.H."/>
            <person name="Yu J."/>
            <person name="Hu S."/>
            <person name="Xiao X."/>
        </authorList>
    </citation>
    <scope>NUCLEOTIDE SEQUENCE [LARGE SCALE GENOMIC DNA]</scope>
    <source>
        <strain>WP3 / JCM 13877</strain>
    </source>
</reference>
<proteinExistence type="inferred from homology"/>
<comment type="function">
    <text evidence="1">Produces ATP from ADP in the presence of a proton gradient across the membrane.</text>
</comment>
<comment type="subunit">
    <text evidence="1">F-type ATPases have 2 components, CF(1) - the catalytic core - and CF(0) - the membrane proton channel. CF(1) has five subunits: alpha(3), beta(3), gamma(1), delta(1), epsilon(1). CF(0) has three main subunits: a, b and c.</text>
</comment>
<comment type="subcellular location">
    <subcellularLocation>
        <location evidence="1">Cell inner membrane</location>
        <topology evidence="1">Peripheral membrane protein</topology>
    </subcellularLocation>
</comment>
<comment type="similarity">
    <text evidence="1">Belongs to the ATPase epsilon chain family.</text>
</comment>
<organism>
    <name type="scientific">Shewanella piezotolerans (strain WP3 / JCM 13877)</name>
    <dbReference type="NCBI Taxonomy" id="225849"/>
    <lineage>
        <taxon>Bacteria</taxon>
        <taxon>Pseudomonadati</taxon>
        <taxon>Pseudomonadota</taxon>
        <taxon>Gammaproteobacteria</taxon>
        <taxon>Alteromonadales</taxon>
        <taxon>Shewanellaceae</taxon>
        <taxon>Shewanella</taxon>
    </lineage>
</organism>
<gene>
    <name evidence="1" type="primary">atpC</name>
    <name type="ordered locus">swp_5155</name>
</gene>
<keyword id="KW-0066">ATP synthesis</keyword>
<keyword id="KW-0997">Cell inner membrane</keyword>
<keyword id="KW-1003">Cell membrane</keyword>
<keyword id="KW-0139">CF(1)</keyword>
<keyword id="KW-0375">Hydrogen ion transport</keyword>
<keyword id="KW-0406">Ion transport</keyword>
<keyword id="KW-0472">Membrane</keyword>
<keyword id="KW-0813">Transport</keyword>
<name>ATPE_SHEPW</name>